<gene>
    <name evidence="1" type="primary">atpE</name>
    <name type="ordered locus">LCABL_13830</name>
</gene>
<keyword id="KW-0066">ATP synthesis</keyword>
<keyword id="KW-1003">Cell membrane</keyword>
<keyword id="KW-0138">CF(0)</keyword>
<keyword id="KW-0375">Hydrogen ion transport</keyword>
<keyword id="KW-0406">Ion transport</keyword>
<keyword id="KW-0446">Lipid-binding</keyword>
<keyword id="KW-0472">Membrane</keyword>
<keyword id="KW-0812">Transmembrane</keyword>
<keyword id="KW-1133">Transmembrane helix</keyword>
<keyword id="KW-0813">Transport</keyword>
<feature type="chain" id="PRO_1000184403" description="ATP synthase subunit c">
    <location>
        <begin position="1"/>
        <end position="70"/>
    </location>
</feature>
<feature type="transmembrane region" description="Helical" evidence="1">
    <location>
        <begin position="3"/>
        <end position="23"/>
    </location>
</feature>
<feature type="transmembrane region" description="Helical" evidence="1">
    <location>
        <begin position="47"/>
        <end position="67"/>
    </location>
</feature>
<feature type="site" description="Reversibly protonated during proton transport" evidence="1">
    <location>
        <position position="54"/>
    </location>
</feature>
<evidence type="ECO:0000255" key="1">
    <source>
        <dbReference type="HAMAP-Rule" id="MF_01396"/>
    </source>
</evidence>
<name>ATPL_LACCB</name>
<accession>B3WDL3</accession>
<sequence length="70" mass="7174">MQFIAASIAAGIAAFGASIGNGMVISKTLEGMARQPEMAGTLRGTMFIGVGLIEAVPILSVVVAFMLMSR</sequence>
<reference key="1">
    <citation type="submission" date="2008-06" db="EMBL/GenBank/DDBJ databases">
        <title>Lactobacillus casei BL23 complete genome sequence.</title>
        <authorList>
            <person name="Maze A."/>
            <person name="Boel G."/>
            <person name="Bourand A."/>
            <person name="Loux V."/>
            <person name="Gibrat J.F."/>
            <person name="Zuniga M."/>
            <person name="Hartke A."/>
            <person name="Deutscher J."/>
        </authorList>
    </citation>
    <scope>NUCLEOTIDE SEQUENCE [LARGE SCALE GENOMIC DNA]</scope>
    <source>
        <strain>BL23</strain>
    </source>
</reference>
<protein>
    <recommendedName>
        <fullName evidence="1">ATP synthase subunit c</fullName>
    </recommendedName>
    <alternativeName>
        <fullName evidence="1">ATP synthase F(0) sector subunit c</fullName>
    </alternativeName>
    <alternativeName>
        <fullName evidence="1">F-type ATPase subunit c</fullName>
        <shortName evidence="1">F-ATPase subunit c</shortName>
    </alternativeName>
    <alternativeName>
        <fullName evidence="1">Lipid-binding protein</fullName>
    </alternativeName>
</protein>
<organism>
    <name type="scientific">Lacticaseibacillus casei (strain BL23)</name>
    <name type="common">Lactobacillus casei</name>
    <dbReference type="NCBI Taxonomy" id="543734"/>
    <lineage>
        <taxon>Bacteria</taxon>
        <taxon>Bacillati</taxon>
        <taxon>Bacillota</taxon>
        <taxon>Bacilli</taxon>
        <taxon>Lactobacillales</taxon>
        <taxon>Lactobacillaceae</taxon>
        <taxon>Lacticaseibacillus</taxon>
    </lineage>
</organism>
<proteinExistence type="inferred from homology"/>
<dbReference type="EMBL" id="FM177140">
    <property type="protein sequence ID" value="CAQ66464.1"/>
    <property type="molecule type" value="Genomic_DNA"/>
</dbReference>
<dbReference type="SMR" id="B3WDL3"/>
<dbReference type="KEGG" id="lcb:LCABL_13830"/>
<dbReference type="HOGENOM" id="CLU_148047_1_1_9"/>
<dbReference type="GO" id="GO:0005886">
    <property type="term" value="C:plasma membrane"/>
    <property type="evidence" value="ECO:0007669"/>
    <property type="project" value="UniProtKB-SubCell"/>
</dbReference>
<dbReference type="GO" id="GO:0045259">
    <property type="term" value="C:proton-transporting ATP synthase complex"/>
    <property type="evidence" value="ECO:0007669"/>
    <property type="project" value="UniProtKB-KW"/>
</dbReference>
<dbReference type="GO" id="GO:0033177">
    <property type="term" value="C:proton-transporting two-sector ATPase complex, proton-transporting domain"/>
    <property type="evidence" value="ECO:0007669"/>
    <property type="project" value="InterPro"/>
</dbReference>
<dbReference type="GO" id="GO:0008289">
    <property type="term" value="F:lipid binding"/>
    <property type="evidence" value="ECO:0007669"/>
    <property type="project" value="UniProtKB-KW"/>
</dbReference>
<dbReference type="GO" id="GO:0046933">
    <property type="term" value="F:proton-transporting ATP synthase activity, rotational mechanism"/>
    <property type="evidence" value="ECO:0007669"/>
    <property type="project" value="UniProtKB-UniRule"/>
</dbReference>
<dbReference type="CDD" id="cd18185">
    <property type="entry name" value="ATP-synt_Fo_c_ATPE"/>
    <property type="match status" value="1"/>
</dbReference>
<dbReference type="FunFam" id="1.20.20.10:FF:000004">
    <property type="entry name" value="ATP synthase subunit c"/>
    <property type="match status" value="1"/>
</dbReference>
<dbReference type="Gene3D" id="1.20.20.10">
    <property type="entry name" value="F1F0 ATP synthase subunit C"/>
    <property type="match status" value="1"/>
</dbReference>
<dbReference type="HAMAP" id="MF_01396">
    <property type="entry name" value="ATP_synth_c_bact"/>
    <property type="match status" value="1"/>
</dbReference>
<dbReference type="InterPro" id="IPR005953">
    <property type="entry name" value="ATP_synth_csu_bac/chlpt"/>
</dbReference>
<dbReference type="InterPro" id="IPR000454">
    <property type="entry name" value="ATP_synth_F0_csu"/>
</dbReference>
<dbReference type="InterPro" id="IPR020537">
    <property type="entry name" value="ATP_synth_F0_csu_DDCD_BS"/>
</dbReference>
<dbReference type="InterPro" id="IPR038662">
    <property type="entry name" value="ATP_synth_F0_csu_sf"/>
</dbReference>
<dbReference type="InterPro" id="IPR002379">
    <property type="entry name" value="ATPase_proteolipid_c-like_dom"/>
</dbReference>
<dbReference type="InterPro" id="IPR035921">
    <property type="entry name" value="F/V-ATP_Csub_sf"/>
</dbReference>
<dbReference type="NCBIfam" id="TIGR01260">
    <property type="entry name" value="ATP_synt_c"/>
    <property type="match status" value="1"/>
</dbReference>
<dbReference type="NCBIfam" id="NF005363">
    <property type="entry name" value="PRK06876.1"/>
    <property type="match status" value="1"/>
</dbReference>
<dbReference type="PANTHER" id="PTHR10031">
    <property type="entry name" value="ATP SYNTHASE LIPID-BINDING PROTEIN, MITOCHONDRIAL"/>
    <property type="match status" value="1"/>
</dbReference>
<dbReference type="PANTHER" id="PTHR10031:SF0">
    <property type="entry name" value="ATPASE PROTEIN 9"/>
    <property type="match status" value="1"/>
</dbReference>
<dbReference type="Pfam" id="PF00137">
    <property type="entry name" value="ATP-synt_C"/>
    <property type="match status" value="1"/>
</dbReference>
<dbReference type="PRINTS" id="PR00124">
    <property type="entry name" value="ATPASEC"/>
</dbReference>
<dbReference type="SUPFAM" id="SSF81333">
    <property type="entry name" value="F1F0 ATP synthase subunit C"/>
    <property type="match status" value="1"/>
</dbReference>
<dbReference type="PROSITE" id="PS00605">
    <property type="entry name" value="ATPASE_C"/>
    <property type="match status" value="1"/>
</dbReference>
<comment type="function">
    <text evidence="1">F(1)F(0) ATP synthase produces ATP from ADP in the presence of a proton or sodium gradient. F-type ATPases consist of two structural domains, F(1) containing the extramembraneous catalytic core and F(0) containing the membrane proton channel, linked together by a central stalk and a peripheral stalk. During catalysis, ATP synthesis in the catalytic domain of F(1) is coupled via a rotary mechanism of the central stalk subunits to proton translocation.</text>
</comment>
<comment type="function">
    <text evidence="1">Key component of the F(0) channel; it plays a direct role in translocation across the membrane. A homomeric c-ring of between 10-14 subunits forms the central stalk rotor element with the F(1) delta and epsilon subunits.</text>
</comment>
<comment type="subunit">
    <text evidence="1">F-type ATPases have 2 components, F(1) - the catalytic core - and F(0) - the membrane proton channel. F(1) has five subunits: alpha(3), beta(3), gamma(1), delta(1), epsilon(1). F(0) has three main subunits: a(1), b(2) and c(10-14). The alpha and beta chains form an alternating ring which encloses part of the gamma chain. F(1) is attached to F(0) by a central stalk formed by the gamma and epsilon chains, while a peripheral stalk is formed by the delta and b chains.</text>
</comment>
<comment type="subcellular location">
    <subcellularLocation>
        <location evidence="1">Cell membrane</location>
        <topology evidence="1">Multi-pass membrane protein</topology>
    </subcellularLocation>
</comment>
<comment type="similarity">
    <text evidence="1">Belongs to the ATPase C chain family.</text>
</comment>